<reference key="1">
    <citation type="journal article" date="2001" name="Nucleic Acids Res.">
        <title>The Dictyostelium discoideum family of Rho-related proteins.</title>
        <authorList>
            <person name="Rivero F."/>
            <person name="Dislich H."/>
            <person name="Gloeckner G."/>
            <person name="Noegel A.A."/>
        </authorList>
    </citation>
    <scope>NUCLEOTIDE SEQUENCE [GENOMIC DNA]</scope>
    <source>
        <strain>AX4</strain>
    </source>
</reference>
<reference key="2">
    <citation type="journal article" date="2002" name="Nature">
        <title>Sequence and analysis of chromosome 2 of Dictyostelium discoideum.</title>
        <authorList>
            <person name="Gloeckner G."/>
            <person name="Eichinger L."/>
            <person name="Szafranski K."/>
            <person name="Pachebat J.A."/>
            <person name="Bankier A.T."/>
            <person name="Dear P.H."/>
            <person name="Lehmann R."/>
            <person name="Baumgart C."/>
            <person name="Parra G."/>
            <person name="Abril J.F."/>
            <person name="Guigo R."/>
            <person name="Kumpf K."/>
            <person name="Tunggal B."/>
            <person name="Cox E.C."/>
            <person name="Quail M.A."/>
            <person name="Platzer M."/>
            <person name="Rosenthal A."/>
            <person name="Noegel A.A."/>
        </authorList>
    </citation>
    <scope>NUCLEOTIDE SEQUENCE [LARGE SCALE GENOMIC DNA]</scope>
    <source>
        <strain>AX4</strain>
    </source>
</reference>
<reference key="3">
    <citation type="journal article" date="2005" name="Nature">
        <title>The genome of the social amoeba Dictyostelium discoideum.</title>
        <authorList>
            <person name="Eichinger L."/>
            <person name="Pachebat J.A."/>
            <person name="Gloeckner G."/>
            <person name="Rajandream M.A."/>
            <person name="Sucgang R."/>
            <person name="Berriman M."/>
            <person name="Song J."/>
            <person name="Olsen R."/>
            <person name="Szafranski K."/>
            <person name="Xu Q."/>
            <person name="Tunggal B."/>
            <person name="Kummerfeld S."/>
            <person name="Madera M."/>
            <person name="Konfortov B.A."/>
            <person name="Rivero F."/>
            <person name="Bankier A.T."/>
            <person name="Lehmann R."/>
            <person name="Hamlin N."/>
            <person name="Davies R."/>
            <person name="Gaudet P."/>
            <person name="Fey P."/>
            <person name="Pilcher K."/>
            <person name="Chen G."/>
            <person name="Saunders D."/>
            <person name="Sodergren E.J."/>
            <person name="Davis P."/>
            <person name="Kerhornou A."/>
            <person name="Nie X."/>
            <person name="Hall N."/>
            <person name="Anjard C."/>
            <person name="Hemphill L."/>
            <person name="Bason N."/>
            <person name="Farbrother P."/>
            <person name="Desany B."/>
            <person name="Just E."/>
            <person name="Morio T."/>
            <person name="Rost R."/>
            <person name="Churcher C.M."/>
            <person name="Cooper J."/>
            <person name="Haydock S."/>
            <person name="van Driessche N."/>
            <person name="Cronin A."/>
            <person name="Goodhead I."/>
            <person name="Muzny D.M."/>
            <person name="Mourier T."/>
            <person name="Pain A."/>
            <person name="Lu M."/>
            <person name="Harper D."/>
            <person name="Lindsay R."/>
            <person name="Hauser H."/>
            <person name="James K.D."/>
            <person name="Quiles M."/>
            <person name="Madan Babu M."/>
            <person name="Saito T."/>
            <person name="Buchrieser C."/>
            <person name="Wardroper A."/>
            <person name="Felder M."/>
            <person name="Thangavelu M."/>
            <person name="Johnson D."/>
            <person name="Knights A."/>
            <person name="Loulseged H."/>
            <person name="Mungall K.L."/>
            <person name="Oliver K."/>
            <person name="Price C."/>
            <person name="Quail M.A."/>
            <person name="Urushihara H."/>
            <person name="Hernandez J."/>
            <person name="Rabbinowitsch E."/>
            <person name="Steffen D."/>
            <person name="Sanders M."/>
            <person name="Ma J."/>
            <person name="Kohara Y."/>
            <person name="Sharp S."/>
            <person name="Simmonds M.N."/>
            <person name="Spiegler S."/>
            <person name="Tivey A."/>
            <person name="Sugano S."/>
            <person name="White B."/>
            <person name="Walker D."/>
            <person name="Woodward J.R."/>
            <person name="Winckler T."/>
            <person name="Tanaka Y."/>
            <person name="Shaulsky G."/>
            <person name="Schleicher M."/>
            <person name="Weinstock G.M."/>
            <person name="Rosenthal A."/>
            <person name="Cox E.C."/>
            <person name="Chisholm R.L."/>
            <person name="Gibbs R.A."/>
            <person name="Loomis W.F."/>
            <person name="Platzer M."/>
            <person name="Kay R.R."/>
            <person name="Williams J.G."/>
            <person name="Dear P.H."/>
            <person name="Noegel A.A."/>
            <person name="Barrell B.G."/>
            <person name="Kuspa A."/>
        </authorList>
    </citation>
    <scope>NUCLEOTIDE SEQUENCE [LARGE SCALE GENOMIC DNA]</scope>
    <source>
        <strain>AX4</strain>
    </source>
</reference>
<sequence>MQNIKCVVVGDGAVGKTCMLISYTTNGFPSEYLPTVFDNYCANLMLDGKPYSLGLWDTAGQEEYDRLRPLSYPQTDVFLICFSIISQSSFENVSTKWFKEVNHHAPGVPIVLVGTKQDIRNDNDSIKKLKERNIELVPYEKGLEKAKEINAIYLEASALTQRGVKNVFDQCIRSVIYPNKLNKKPKKKTCTIM</sequence>
<dbReference type="EMBL" id="AF310892">
    <property type="protein sequence ID" value="AAG45127.1"/>
    <property type="molecule type" value="Genomic_DNA"/>
</dbReference>
<dbReference type="EMBL" id="AAFI02000019">
    <property type="protein sequence ID" value="EAL68985.1"/>
    <property type="molecule type" value="Genomic_DNA"/>
</dbReference>
<dbReference type="RefSeq" id="XP_642823.1">
    <property type="nucleotide sequence ID" value="XM_637731.1"/>
</dbReference>
<dbReference type="SMR" id="Q9GPS3"/>
<dbReference type="FunCoup" id="Q9GPS3">
    <property type="interactions" value="58"/>
</dbReference>
<dbReference type="STRING" id="44689.Q9GPS3"/>
<dbReference type="PaxDb" id="44689-DDB0191352"/>
<dbReference type="EnsemblProtists" id="EAL68985">
    <property type="protein sequence ID" value="EAL68985"/>
    <property type="gene ID" value="DDB_G0276967"/>
</dbReference>
<dbReference type="GeneID" id="8620686"/>
<dbReference type="KEGG" id="ddi:DDB_G0276967"/>
<dbReference type="dictyBase" id="DDB_G0276967">
    <property type="gene designation" value="racF2"/>
</dbReference>
<dbReference type="VEuPathDB" id="AmoebaDB:DDB_G0276967"/>
<dbReference type="eggNOG" id="KOG0393">
    <property type="taxonomic scope" value="Eukaryota"/>
</dbReference>
<dbReference type="HOGENOM" id="CLU_041217_21_3_1"/>
<dbReference type="InParanoid" id="Q9GPS3"/>
<dbReference type="OMA" id="KKECIMQ"/>
<dbReference type="PhylomeDB" id="Q9GPS3"/>
<dbReference type="Reactome" id="R-DDI-6798695">
    <property type="pathway name" value="Neutrophil degranulation"/>
</dbReference>
<dbReference type="Reactome" id="R-DDI-9013404">
    <property type="pathway name" value="RAC2 GTPase cycle"/>
</dbReference>
<dbReference type="Reactome" id="R-DDI-9013407">
    <property type="pathway name" value="RHOH GTPase cycle"/>
</dbReference>
<dbReference type="Reactome" id="R-DDI-9013408">
    <property type="pathway name" value="RHOG GTPase cycle"/>
</dbReference>
<dbReference type="Reactome" id="R-DDI-9013418">
    <property type="pathway name" value="RHOBTB2 GTPase cycle"/>
</dbReference>
<dbReference type="Reactome" id="R-DDI-9013422">
    <property type="pathway name" value="RHOBTB1 GTPase cycle"/>
</dbReference>
<dbReference type="PRO" id="PR:Q9GPS3"/>
<dbReference type="Proteomes" id="UP000002195">
    <property type="component" value="Chromosome 2"/>
</dbReference>
<dbReference type="GO" id="GO:0042995">
    <property type="term" value="C:cell projection"/>
    <property type="evidence" value="ECO:0000318"/>
    <property type="project" value="GO_Central"/>
</dbReference>
<dbReference type="GO" id="GO:0031410">
    <property type="term" value="C:cytoplasmic vesicle"/>
    <property type="evidence" value="ECO:0000318"/>
    <property type="project" value="GO_Central"/>
</dbReference>
<dbReference type="GO" id="GO:0005856">
    <property type="term" value="C:cytoskeleton"/>
    <property type="evidence" value="ECO:0000318"/>
    <property type="project" value="GO_Central"/>
</dbReference>
<dbReference type="GO" id="GO:0005886">
    <property type="term" value="C:plasma membrane"/>
    <property type="evidence" value="ECO:0000318"/>
    <property type="project" value="GO_Central"/>
</dbReference>
<dbReference type="GO" id="GO:0005525">
    <property type="term" value="F:GTP binding"/>
    <property type="evidence" value="ECO:0000318"/>
    <property type="project" value="GO_Central"/>
</dbReference>
<dbReference type="GO" id="GO:0003924">
    <property type="term" value="F:GTPase activity"/>
    <property type="evidence" value="ECO:0000318"/>
    <property type="project" value="GO_Central"/>
</dbReference>
<dbReference type="GO" id="GO:0019901">
    <property type="term" value="F:protein kinase binding"/>
    <property type="evidence" value="ECO:0000250"/>
    <property type="project" value="dictyBase"/>
</dbReference>
<dbReference type="GO" id="GO:0007015">
    <property type="term" value="P:actin filament organization"/>
    <property type="evidence" value="ECO:0000318"/>
    <property type="project" value="GO_Central"/>
</dbReference>
<dbReference type="GO" id="GO:0031152">
    <property type="term" value="P:aggregation involved in sorocarp development"/>
    <property type="evidence" value="ECO:0000315"/>
    <property type="project" value="dictyBase"/>
</dbReference>
<dbReference type="GO" id="GO:0098609">
    <property type="term" value="P:cell-cell adhesion"/>
    <property type="evidence" value="ECO:0000315"/>
    <property type="project" value="dictyBase"/>
</dbReference>
<dbReference type="GO" id="GO:0030865">
    <property type="term" value="P:cortical cytoskeleton organization"/>
    <property type="evidence" value="ECO:0000318"/>
    <property type="project" value="GO_Central"/>
</dbReference>
<dbReference type="GO" id="GO:0007163">
    <property type="term" value="P:establishment or maintenance of cell polarity"/>
    <property type="evidence" value="ECO:0000318"/>
    <property type="project" value="GO_Central"/>
</dbReference>
<dbReference type="GO" id="GO:0000281">
    <property type="term" value="P:mitotic cytokinesis"/>
    <property type="evidence" value="ECO:0000318"/>
    <property type="project" value="GO_Central"/>
</dbReference>
<dbReference type="GO" id="GO:0032956">
    <property type="term" value="P:regulation of actin cytoskeleton organization"/>
    <property type="evidence" value="ECO:0000318"/>
    <property type="project" value="GO_Central"/>
</dbReference>
<dbReference type="GO" id="GO:0008360">
    <property type="term" value="P:regulation of cell shape"/>
    <property type="evidence" value="ECO:0000318"/>
    <property type="project" value="GO_Central"/>
</dbReference>
<dbReference type="GO" id="GO:1902351">
    <property type="term" value="P:response to imidacloprid"/>
    <property type="evidence" value="ECO:0000270"/>
    <property type="project" value="dictyBase"/>
</dbReference>
<dbReference type="GO" id="GO:0019953">
    <property type="term" value="P:sexual reproduction"/>
    <property type="evidence" value="ECO:0000315"/>
    <property type="project" value="dictyBase"/>
</dbReference>
<dbReference type="GO" id="GO:0007165">
    <property type="term" value="P:signal transduction"/>
    <property type="evidence" value="ECO:0000318"/>
    <property type="project" value="GO_Central"/>
</dbReference>
<dbReference type="GO" id="GO:0007264">
    <property type="term" value="P:small GTPase-mediated signal transduction"/>
    <property type="evidence" value="ECO:0007669"/>
    <property type="project" value="InterPro"/>
</dbReference>
<dbReference type="CDD" id="cd00157">
    <property type="entry name" value="Rho"/>
    <property type="match status" value="1"/>
</dbReference>
<dbReference type="FunFam" id="3.40.50.300:FF:000118">
    <property type="entry name" value="Rho-related GTP-binding protein RhoG"/>
    <property type="match status" value="1"/>
</dbReference>
<dbReference type="Gene3D" id="3.40.50.300">
    <property type="entry name" value="P-loop containing nucleotide triphosphate hydrolases"/>
    <property type="match status" value="1"/>
</dbReference>
<dbReference type="InterPro" id="IPR027417">
    <property type="entry name" value="P-loop_NTPase"/>
</dbReference>
<dbReference type="InterPro" id="IPR005225">
    <property type="entry name" value="Small_GTP-bd"/>
</dbReference>
<dbReference type="InterPro" id="IPR001806">
    <property type="entry name" value="Small_GTPase"/>
</dbReference>
<dbReference type="InterPro" id="IPR003578">
    <property type="entry name" value="Small_GTPase_Rho"/>
</dbReference>
<dbReference type="NCBIfam" id="TIGR00231">
    <property type="entry name" value="small_GTP"/>
    <property type="match status" value="1"/>
</dbReference>
<dbReference type="PANTHER" id="PTHR24072">
    <property type="entry name" value="RHO FAMILY GTPASE"/>
    <property type="match status" value="1"/>
</dbReference>
<dbReference type="Pfam" id="PF00071">
    <property type="entry name" value="Ras"/>
    <property type="match status" value="1"/>
</dbReference>
<dbReference type="PRINTS" id="PR00449">
    <property type="entry name" value="RASTRNSFRMNG"/>
</dbReference>
<dbReference type="SMART" id="SM00175">
    <property type="entry name" value="RAB"/>
    <property type="match status" value="1"/>
</dbReference>
<dbReference type="SMART" id="SM00173">
    <property type="entry name" value="RAS"/>
    <property type="match status" value="1"/>
</dbReference>
<dbReference type="SMART" id="SM00174">
    <property type="entry name" value="RHO"/>
    <property type="match status" value="1"/>
</dbReference>
<dbReference type="SUPFAM" id="SSF52540">
    <property type="entry name" value="P-loop containing nucleoside triphosphate hydrolases"/>
    <property type="match status" value="1"/>
</dbReference>
<dbReference type="PROSITE" id="PS51420">
    <property type="entry name" value="RHO"/>
    <property type="match status" value="1"/>
</dbReference>
<gene>
    <name type="primary">racF2</name>
    <name type="ORF">DDB_G0276967</name>
</gene>
<protein>
    <recommendedName>
        <fullName>Rho-related protein racF2</fullName>
    </recommendedName>
</protein>
<proteinExistence type="inferred from homology"/>
<keyword id="KW-1003">Cell membrane</keyword>
<keyword id="KW-0342">GTP-binding</keyword>
<keyword id="KW-0449">Lipoprotein</keyword>
<keyword id="KW-0472">Membrane</keyword>
<keyword id="KW-0488">Methylation</keyword>
<keyword id="KW-0547">Nucleotide-binding</keyword>
<keyword id="KW-0636">Prenylation</keyword>
<keyword id="KW-1185">Reference proteome</keyword>
<evidence type="ECO:0000250" key="1"/>
<evidence type="ECO:0000255" key="2"/>
<evidence type="ECO:0000305" key="3"/>
<accession>Q9GPS3</accession>
<accession>Q550V9</accession>
<feature type="chain" id="PRO_0000198904" description="Rho-related protein racF2">
    <location>
        <begin position="1"/>
        <end position="190"/>
    </location>
</feature>
<feature type="propeptide" id="PRO_0000281253" description="Removed in mature form" evidence="1">
    <location>
        <begin position="191"/>
        <end position="193"/>
    </location>
</feature>
<feature type="short sequence motif" description="Effector region" evidence="2">
    <location>
        <begin position="32"/>
        <end position="40"/>
    </location>
</feature>
<feature type="binding site" evidence="1">
    <location>
        <begin position="10"/>
        <end position="17"/>
    </location>
    <ligand>
        <name>GTP</name>
        <dbReference type="ChEBI" id="CHEBI:37565"/>
    </ligand>
</feature>
<feature type="binding site" evidence="1">
    <location>
        <begin position="57"/>
        <end position="61"/>
    </location>
    <ligand>
        <name>GTP</name>
        <dbReference type="ChEBI" id="CHEBI:37565"/>
    </ligand>
</feature>
<feature type="binding site" evidence="1">
    <location>
        <begin position="115"/>
        <end position="118"/>
    </location>
    <ligand>
        <name>GTP</name>
        <dbReference type="ChEBI" id="CHEBI:37565"/>
    </ligand>
</feature>
<feature type="modified residue" description="Cysteine methyl ester" evidence="1">
    <location>
        <position position="190"/>
    </location>
</feature>
<feature type="lipid moiety-binding region" description="S-geranylgeranyl cysteine" evidence="1">
    <location>
        <position position="190"/>
    </location>
</feature>
<comment type="subcellular location">
    <subcellularLocation>
        <location evidence="3">Cell membrane</location>
        <topology evidence="3">Lipid-anchor</topology>
        <orientation evidence="3">Cytoplasmic side</orientation>
    </subcellularLocation>
</comment>
<comment type="similarity">
    <text evidence="3">Belongs to the small GTPase superfamily. Rho family.</text>
</comment>
<name>RACF2_DICDI</name>
<organism>
    <name type="scientific">Dictyostelium discoideum</name>
    <name type="common">Social amoeba</name>
    <dbReference type="NCBI Taxonomy" id="44689"/>
    <lineage>
        <taxon>Eukaryota</taxon>
        <taxon>Amoebozoa</taxon>
        <taxon>Evosea</taxon>
        <taxon>Eumycetozoa</taxon>
        <taxon>Dictyostelia</taxon>
        <taxon>Dictyosteliales</taxon>
        <taxon>Dictyosteliaceae</taxon>
        <taxon>Dictyostelium</taxon>
    </lineage>
</organism>